<organism>
    <name type="scientific">Escherichia coli O8 (strain IAI1)</name>
    <dbReference type="NCBI Taxonomy" id="585034"/>
    <lineage>
        <taxon>Bacteria</taxon>
        <taxon>Pseudomonadati</taxon>
        <taxon>Pseudomonadota</taxon>
        <taxon>Gammaproteobacteria</taxon>
        <taxon>Enterobacterales</taxon>
        <taxon>Enterobacteriaceae</taxon>
        <taxon>Escherichia</taxon>
    </lineage>
</organism>
<name>ZUPT_ECO8A</name>
<sequence length="257" mass="26485">MSVPLILTILAGAATFIGAFLGVLGQKPSNRLLAFSLGFAAGIMLLISLMEMLPAALAAEGMSPVLGYGMFIFGLLGYFGLDRMLPHAHPQDLMQKSVQPLPKSIKRTAILLTLGISLHNFPEGIATFVTASSNLELGFGIALAVALHNIPEGLAVAGPVYAATGSKRTAILWAGISGLAEILGGVLAWLILGSMISPVVMAAIMAAVAGIMVALSVDELMPLAKEIDPNNNPSYGVLCGMSVMGFSLVLLQTAGIG</sequence>
<accession>B7LZI9</accession>
<protein>
    <recommendedName>
        <fullName evidence="1">Zinc transporter ZupT</fullName>
    </recommendedName>
</protein>
<keyword id="KW-0997">Cell inner membrane</keyword>
<keyword id="KW-1003">Cell membrane</keyword>
<keyword id="KW-0406">Ion transport</keyword>
<keyword id="KW-0408">Iron</keyword>
<keyword id="KW-0472">Membrane</keyword>
<keyword id="KW-0479">Metal-binding</keyword>
<keyword id="KW-0812">Transmembrane</keyword>
<keyword id="KW-1133">Transmembrane helix</keyword>
<keyword id="KW-0813">Transport</keyword>
<keyword id="KW-0862">Zinc</keyword>
<keyword id="KW-0864">Zinc transport</keyword>
<dbReference type="EMBL" id="CU928160">
    <property type="protein sequence ID" value="CAR00001.1"/>
    <property type="molecule type" value="Genomic_DNA"/>
</dbReference>
<dbReference type="RefSeq" id="WP_001295627.1">
    <property type="nucleotide sequence ID" value="NC_011741.1"/>
</dbReference>
<dbReference type="SMR" id="B7LZI9"/>
<dbReference type="GeneID" id="93778954"/>
<dbReference type="KEGG" id="ecr:ECIAI1_3187"/>
<dbReference type="HOGENOM" id="CLU_015114_1_3_6"/>
<dbReference type="GO" id="GO:0005886">
    <property type="term" value="C:plasma membrane"/>
    <property type="evidence" value="ECO:0007669"/>
    <property type="project" value="UniProtKB-SubCell"/>
</dbReference>
<dbReference type="GO" id="GO:0046872">
    <property type="term" value="F:metal ion binding"/>
    <property type="evidence" value="ECO:0007669"/>
    <property type="project" value="UniProtKB-KW"/>
</dbReference>
<dbReference type="GO" id="GO:0005385">
    <property type="term" value="F:zinc ion transmembrane transporter activity"/>
    <property type="evidence" value="ECO:0007669"/>
    <property type="project" value="UniProtKB-UniRule"/>
</dbReference>
<dbReference type="HAMAP" id="MF_00548">
    <property type="entry name" value="ZupT"/>
    <property type="match status" value="1"/>
</dbReference>
<dbReference type="InterPro" id="IPR003689">
    <property type="entry name" value="ZIP"/>
</dbReference>
<dbReference type="InterPro" id="IPR023498">
    <property type="entry name" value="Zn_transptr_ZupT"/>
</dbReference>
<dbReference type="NCBIfam" id="NF003243">
    <property type="entry name" value="PRK04201.1"/>
    <property type="match status" value="1"/>
</dbReference>
<dbReference type="PANTHER" id="PTHR11040:SF205">
    <property type="entry name" value="ZINC TRANSPORTER ZUPT"/>
    <property type="match status" value="1"/>
</dbReference>
<dbReference type="PANTHER" id="PTHR11040">
    <property type="entry name" value="ZINC/IRON TRANSPORTER"/>
    <property type="match status" value="1"/>
</dbReference>
<dbReference type="Pfam" id="PF02535">
    <property type="entry name" value="Zip"/>
    <property type="match status" value="2"/>
</dbReference>
<proteinExistence type="inferred from homology"/>
<evidence type="ECO:0000255" key="1">
    <source>
        <dbReference type="HAMAP-Rule" id="MF_00548"/>
    </source>
</evidence>
<feature type="chain" id="PRO_1000128951" description="Zinc transporter ZupT">
    <location>
        <begin position="1"/>
        <end position="257"/>
    </location>
</feature>
<feature type="transmembrane region" description="Helical" evidence="1">
    <location>
        <begin position="5"/>
        <end position="25"/>
    </location>
</feature>
<feature type="transmembrane region" description="Helical" evidence="1">
    <location>
        <begin position="32"/>
        <end position="52"/>
    </location>
</feature>
<feature type="transmembrane region" description="Helical" evidence="1">
    <location>
        <begin position="61"/>
        <end position="81"/>
    </location>
</feature>
<feature type="transmembrane region" description="Helical" evidence="1">
    <location>
        <begin position="137"/>
        <end position="157"/>
    </location>
</feature>
<feature type="transmembrane region" description="Helical" evidence="1">
    <location>
        <begin position="171"/>
        <end position="191"/>
    </location>
</feature>
<feature type="transmembrane region" description="Helical" evidence="1">
    <location>
        <begin position="195"/>
        <end position="215"/>
    </location>
</feature>
<feature type="transmembrane region" description="Helical" evidence="1">
    <location>
        <begin position="236"/>
        <end position="256"/>
    </location>
</feature>
<feature type="binding site" description="M2 metal binding site" evidence="1">
    <location>
        <position position="120"/>
    </location>
    <ligand>
        <name>Fe(2+)</name>
        <dbReference type="ChEBI" id="CHEBI:29033"/>
    </ligand>
</feature>
<feature type="binding site" description="M2 metal binding site" evidence="1">
    <location>
        <position position="123"/>
    </location>
    <ligand>
        <name>Fe(2+)</name>
        <dbReference type="ChEBI" id="CHEBI:29033"/>
    </ligand>
</feature>
<feature type="binding site" description="M1 metal binding site" evidence="1">
    <location>
        <position position="123"/>
    </location>
    <ligand>
        <name>Zn(2+)</name>
        <dbReference type="ChEBI" id="CHEBI:29105"/>
    </ligand>
</feature>
<feature type="binding site" description="M1 metal binding site" evidence="1">
    <location>
        <position position="148"/>
    </location>
    <ligand>
        <name>Zn(2+)</name>
        <dbReference type="ChEBI" id="CHEBI:29105"/>
    </ligand>
</feature>
<feature type="binding site" description="M2 metal binding site" evidence="1">
    <location>
        <position position="149"/>
    </location>
    <ligand>
        <name>Fe(2+)</name>
        <dbReference type="ChEBI" id="CHEBI:29033"/>
    </ligand>
</feature>
<feature type="binding site" description="M2 metal binding site" evidence="1">
    <location>
        <position position="152"/>
    </location>
    <ligand>
        <name>Fe(2+)</name>
        <dbReference type="ChEBI" id="CHEBI:29033"/>
    </ligand>
</feature>
<feature type="binding site" description="M1 metal binding site" evidence="1">
    <location>
        <position position="152"/>
    </location>
    <ligand>
        <name>Zn(2+)</name>
        <dbReference type="ChEBI" id="CHEBI:29105"/>
    </ligand>
</feature>
<feature type="binding site" description="M2 metal binding site" evidence="1">
    <location>
        <position position="181"/>
    </location>
    <ligand>
        <name>Fe(2+)</name>
        <dbReference type="ChEBI" id="CHEBI:29033"/>
    </ligand>
</feature>
<comment type="function">
    <text evidence="1">Mediates zinc uptake. May also transport other divalent cations.</text>
</comment>
<comment type="catalytic activity">
    <reaction evidence="1">
        <text>Zn(2+)(in) = Zn(2+)(out)</text>
        <dbReference type="Rhea" id="RHEA:29351"/>
        <dbReference type="ChEBI" id="CHEBI:29105"/>
    </reaction>
</comment>
<comment type="subcellular location">
    <subcellularLocation>
        <location evidence="1">Cell inner membrane</location>
        <topology evidence="1">Multi-pass membrane protein</topology>
    </subcellularLocation>
</comment>
<comment type="similarity">
    <text evidence="1">Belongs to the ZIP transporter (TC 2.A.5) family. ZupT subfamily.</text>
</comment>
<gene>
    <name evidence="1" type="primary">zupT</name>
    <name type="ordered locus">ECIAI1_3187</name>
</gene>
<reference key="1">
    <citation type="journal article" date="2009" name="PLoS Genet.">
        <title>Organised genome dynamics in the Escherichia coli species results in highly diverse adaptive paths.</title>
        <authorList>
            <person name="Touchon M."/>
            <person name="Hoede C."/>
            <person name="Tenaillon O."/>
            <person name="Barbe V."/>
            <person name="Baeriswyl S."/>
            <person name="Bidet P."/>
            <person name="Bingen E."/>
            <person name="Bonacorsi S."/>
            <person name="Bouchier C."/>
            <person name="Bouvet O."/>
            <person name="Calteau A."/>
            <person name="Chiapello H."/>
            <person name="Clermont O."/>
            <person name="Cruveiller S."/>
            <person name="Danchin A."/>
            <person name="Diard M."/>
            <person name="Dossat C."/>
            <person name="Karoui M.E."/>
            <person name="Frapy E."/>
            <person name="Garry L."/>
            <person name="Ghigo J.M."/>
            <person name="Gilles A.M."/>
            <person name="Johnson J."/>
            <person name="Le Bouguenec C."/>
            <person name="Lescat M."/>
            <person name="Mangenot S."/>
            <person name="Martinez-Jehanne V."/>
            <person name="Matic I."/>
            <person name="Nassif X."/>
            <person name="Oztas S."/>
            <person name="Petit M.A."/>
            <person name="Pichon C."/>
            <person name="Rouy Z."/>
            <person name="Ruf C.S."/>
            <person name="Schneider D."/>
            <person name="Tourret J."/>
            <person name="Vacherie B."/>
            <person name="Vallenet D."/>
            <person name="Medigue C."/>
            <person name="Rocha E.P.C."/>
            <person name="Denamur E."/>
        </authorList>
    </citation>
    <scope>NUCLEOTIDE SEQUENCE [LARGE SCALE GENOMIC DNA]</scope>
    <source>
        <strain>IAI1</strain>
    </source>
</reference>